<name>SOMA_CHICK</name>
<proteinExistence type="evidence at protein level"/>
<evidence type="ECO:0000250" key="1"/>
<evidence type="ECO:0000305" key="2"/>
<feature type="signal peptide" evidence="1">
    <location>
        <begin position="1"/>
        <end position="25"/>
    </location>
</feature>
<feature type="chain" id="PRO_0000033004" description="Somatotropin">
    <location>
        <begin position="26"/>
        <end position="216"/>
    </location>
</feature>
<feature type="binding site" evidence="1">
    <location>
        <position position="45"/>
    </location>
    <ligand>
        <name>Zn(2+)</name>
        <dbReference type="ChEBI" id="CHEBI:29105"/>
    </ligand>
</feature>
<feature type="binding site" evidence="1">
    <location>
        <position position="198"/>
    </location>
    <ligand>
        <name>Zn(2+)</name>
        <dbReference type="ChEBI" id="CHEBI:29105"/>
    </ligand>
</feature>
<feature type="disulfide bond" evidence="1">
    <location>
        <begin position="78"/>
        <end position="189"/>
    </location>
</feature>
<feature type="disulfide bond" evidence="1">
    <location>
        <begin position="206"/>
        <end position="214"/>
    </location>
</feature>
<feature type="sequence conflict" description="In Ref. 1; CAA31127." evidence="2" ref="1">
    <original>L</original>
    <variation>P</variation>
    <location>
        <position position="101"/>
    </location>
</feature>
<protein>
    <recommendedName>
        <fullName>Somatotropin</fullName>
    </recommendedName>
    <alternativeName>
        <fullName>Growth hormone</fullName>
    </alternativeName>
</protein>
<reference key="1">
    <citation type="journal article" date="1988" name="Nucleic Acids Res.">
        <title>Chicken growth hormone cDNA sequence.</title>
        <authorList>
            <person name="Lamb I.C."/>
            <person name="Galehouse D.M."/>
            <person name="Foster D.N."/>
        </authorList>
    </citation>
    <scope>NUCLEOTIDE SEQUENCE [MRNA]</scope>
</reference>
<reference key="2">
    <citation type="journal article" date="1987" name="Mol. Biol. (Mosk.)">
        <title>Genetic engineering of peptide hormones: I. Cloning and primary structure of cDNA of chicken growth hormone.</title>
        <authorList>
            <person name="Zhvirblis G.S."/>
            <person name="Gorbulev V.G."/>
            <person name="Rubtsov P.M."/>
            <person name="Karapetyan R.V."/>
            <person name="Zhuravlev I.V."/>
            <person name="Fisinin V.I."/>
            <person name="Skryabin K.G."/>
            <person name="Baev A.A."/>
        </authorList>
    </citation>
    <scope>NUCLEOTIDE SEQUENCE [MRNA]</scope>
    <source>
        <tissue>Pituitary</tissue>
    </source>
</reference>
<reference key="3">
    <citation type="journal article" date="1987" name="Mol. Biol. (Mosk.)">
        <title>Genetic engineering of peptide hormones. I. Cloning and primary structure of cDNA of chicken growth hormone.</title>
        <authorList>
            <person name="Zhvirblis G.S."/>
            <person name="Gorbulev V.G."/>
            <person name="Rubtsov P.M."/>
            <person name="Karapetian R.V."/>
            <person name="Zhuravlev I.V."/>
        </authorList>
    </citation>
    <scope>NUCLEOTIDE SEQUENCE [MRNA]</scope>
</reference>
<reference key="4">
    <citation type="journal article" date="1990" name="Comp. Biochem. Physiol.">
        <title>Chicken growth hormone: cDNA-synthesis and base sequence.</title>
        <authorList>
            <person name="Baum D."/>
            <person name="Graser G."/>
            <person name="Heib M."/>
            <person name="Krampitz G."/>
        </authorList>
    </citation>
    <scope>NUCLEOTIDE SEQUENCE [MRNA]</scope>
</reference>
<reference key="5">
    <citation type="journal article" date="1992" name="Gene">
        <title>Structure of the chicken growth hormone-encoding gene and its promoter region.</title>
        <authorList>
            <person name="Tanaka M."/>
            <person name="Hosokawa Y."/>
            <person name="Watahiki M."/>
            <person name="Nakashima K."/>
        </authorList>
    </citation>
    <scope>NUCLEOTIDE SEQUENCE [GENOMIC DNA]</scope>
</reference>
<reference key="6">
    <citation type="submission" date="2000-07" db="EMBL/GenBank/DDBJ databases">
        <title>Chicken growth hormone genomic sequence (Yellow Wai Chow strain).</title>
        <authorList>
            <person name="Ip S.C.Y."/>
            <person name="Chan C."/>
            <person name="Leung F.C."/>
        </authorList>
    </citation>
    <scope>NUCLEOTIDE SEQUENCE [GENOMIC DNA]</scope>
    <source>
        <strain>Yellow Wai Chow</strain>
    </source>
</reference>
<reference key="7">
    <citation type="journal article" date="2003" name="Endocrinology">
        <title>Retinal growth hormone in the chick embryo.</title>
        <authorList>
            <person name="Baudet M.-L."/>
            <person name="Sanders E.J."/>
            <person name="Harvey S."/>
        </authorList>
    </citation>
    <scope>NUCLEOTIDE SEQUENCE [MRNA]</scope>
    <source>
        <tissue>Neuroretina</tissue>
    </source>
</reference>
<reference key="8">
    <citation type="submission" date="2003-11" db="EMBL/GenBank/DDBJ databases">
        <title>Single nucleotide polymorphisms of chicken whole growth hormone gene and their relation to growth traits.</title>
        <authorList>
            <person name="Sun B."/>
            <person name="Nie Q."/>
            <person name="Lei M."/>
            <person name="Zhang X."/>
        </authorList>
    </citation>
    <scope>NUCLEOTIDE SEQUENCE [GENOMIC DNA]</scope>
</reference>
<organism>
    <name type="scientific">Gallus gallus</name>
    <name type="common">Chicken</name>
    <dbReference type="NCBI Taxonomy" id="9031"/>
    <lineage>
        <taxon>Eukaryota</taxon>
        <taxon>Metazoa</taxon>
        <taxon>Chordata</taxon>
        <taxon>Craniata</taxon>
        <taxon>Vertebrata</taxon>
        <taxon>Euteleostomi</taxon>
        <taxon>Archelosauria</taxon>
        <taxon>Archosauria</taxon>
        <taxon>Dinosauria</taxon>
        <taxon>Saurischia</taxon>
        <taxon>Theropoda</taxon>
        <taxon>Coelurosauria</taxon>
        <taxon>Aves</taxon>
        <taxon>Neognathae</taxon>
        <taxon>Galloanserae</taxon>
        <taxon>Galliformes</taxon>
        <taxon>Phasianidae</taxon>
        <taxon>Phasianinae</taxon>
        <taxon>Gallus</taxon>
    </lineage>
</organism>
<gene>
    <name type="primary">GH</name>
</gene>
<comment type="function">
    <text>Growth hormone plays an important role in growth control.</text>
</comment>
<comment type="interaction">
    <interactant intactId="EBI-10951437">
        <id>P08998</id>
    </interactant>
    <interactant intactId="EBI-10951469">
        <id>Q69283</id>
        <label>SORF2</label>
    </interactant>
    <organismsDiffer>true</organismsDiffer>
    <experiments>5</experiments>
</comment>
<comment type="subcellular location">
    <subcellularLocation>
        <location>Secreted</location>
    </subcellularLocation>
</comment>
<comment type="similarity">
    <text evidence="2">Belongs to the somatotropin/prolactin family.</text>
</comment>
<dbReference type="EMBL" id="X12608">
    <property type="protein sequence ID" value="CAA31127.1"/>
    <property type="molecule type" value="mRNA"/>
</dbReference>
<dbReference type="EMBL" id="M35609">
    <property type="protein sequence ID" value="AAA48780.1"/>
    <property type="molecule type" value="mRNA"/>
</dbReference>
<dbReference type="EMBL" id="X17618">
    <property type="protein sequence ID" value="CAA35619.1"/>
    <property type="molecule type" value="mRNA"/>
</dbReference>
<dbReference type="EMBL" id="D10484">
    <property type="protein sequence ID" value="BAA01365.1"/>
    <property type="molecule type" value="Genomic_DNA"/>
</dbReference>
<dbReference type="EMBL" id="AF289468">
    <property type="protein sequence ID" value="AAG01029.1"/>
    <property type="molecule type" value="Genomic_DNA"/>
</dbReference>
<dbReference type="EMBL" id="AY373631">
    <property type="protein sequence ID" value="AAQ81586.1"/>
    <property type="molecule type" value="mRNA"/>
</dbReference>
<dbReference type="EMBL" id="AY461843">
    <property type="protein sequence ID" value="AAR23809.1"/>
    <property type="molecule type" value="Genomic_DNA"/>
</dbReference>
<dbReference type="PIR" id="JH0630">
    <property type="entry name" value="A60509"/>
</dbReference>
<dbReference type="RefSeq" id="NP_989690.1">
    <property type="nucleotide sequence ID" value="NM_204359.2"/>
</dbReference>
<dbReference type="SMR" id="P08998"/>
<dbReference type="FunCoup" id="P08998">
    <property type="interactions" value="81"/>
</dbReference>
<dbReference type="IntAct" id="P08998">
    <property type="interactions" value="1"/>
</dbReference>
<dbReference type="STRING" id="9031.ENSGALP00000000327"/>
<dbReference type="PaxDb" id="9031-ENSGALP00000000327"/>
<dbReference type="Ensembl" id="ENSGALT00010057492.1">
    <property type="protein sequence ID" value="ENSGALP00010034935.1"/>
    <property type="gene ID" value="ENSGALG00010023602.1"/>
</dbReference>
<dbReference type="GeneID" id="378781"/>
<dbReference type="KEGG" id="gga:378781"/>
<dbReference type="CTD" id="14599"/>
<dbReference type="VEuPathDB" id="HostDB:geneid_378781"/>
<dbReference type="eggNOG" id="ENOG502R5GJ">
    <property type="taxonomic scope" value="Eukaryota"/>
</dbReference>
<dbReference type="GeneTree" id="ENSGT00950000182818"/>
<dbReference type="HOGENOM" id="CLU_088274_2_1_1"/>
<dbReference type="InParanoid" id="P08998"/>
<dbReference type="OMA" id="VAYCYSE"/>
<dbReference type="OrthoDB" id="9925773at2759"/>
<dbReference type="PhylomeDB" id="P08998"/>
<dbReference type="TreeFam" id="TF332592"/>
<dbReference type="Reactome" id="R-GGA-1170546">
    <property type="pathway name" value="Prolactin receptor signaling"/>
</dbReference>
<dbReference type="Reactome" id="R-GGA-422085">
    <property type="pathway name" value="Synthesis, secretion, and deacylation of Ghrelin"/>
</dbReference>
<dbReference type="Reactome" id="R-GGA-982772">
    <property type="pathway name" value="Growth hormone receptor signaling"/>
</dbReference>
<dbReference type="PRO" id="PR:P08998"/>
<dbReference type="Proteomes" id="UP000000539">
    <property type="component" value="Chromosome 27"/>
</dbReference>
<dbReference type="Bgee" id="ENSGALG00000000249">
    <property type="expression patterns" value="Expressed in spleen and 11 other cell types or tissues"/>
</dbReference>
<dbReference type="GO" id="GO:0005615">
    <property type="term" value="C:extracellular space"/>
    <property type="evidence" value="ECO:0000314"/>
    <property type="project" value="AgBase"/>
</dbReference>
<dbReference type="GO" id="GO:0005634">
    <property type="term" value="C:nucleus"/>
    <property type="evidence" value="ECO:0007669"/>
    <property type="project" value="Ensembl"/>
</dbReference>
<dbReference type="GO" id="GO:0005886">
    <property type="term" value="C:plasma membrane"/>
    <property type="evidence" value="ECO:0007669"/>
    <property type="project" value="Ensembl"/>
</dbReference>
<dbReference type="GO" id="GO:0030141">
    <property type="term" value="C:secretory granule"/>
    <property type="evidence" value="ECO:0007669"/>
    <property type="project" value="Ensembl"/>
</dbReference>
<dbReference type="GO" id="GO:0005802">
    <property type="term" value="C:trans-Golgi network"/>
    <property type="evidence" value="ECO:0007669"/>
    <property type="project" value="Ensembl"/>
</dbReference>
<dbReference type="GO" id="GO:0008083">
    <property type="term" value="F:growth factor activity"/>
    <property type="evidence" value="ECO:0000318"/>
    <property type="project" value="GO_Central"/>
</dbReference>
<dbReference type="GO" id="GO:0005131">
    <property type="term" value="F:growth hormone receptor binding"/>
    <property type="evidence" value="ECO:0000318"/>
    <property type="project" value="GO_Central"/>
</dbReference>
<dbReference type="GO" id="GO:0005179">
    <property type="term" value="F:hormone activity"/>
    <property type="evidence" value="ECO:0000318"/>
    <property type="project" value="GO_Central"/>
</dbReference>
<dbReference type="GO" id="GO:0046872">
    <property type="term" value="F:metal ion binding"/>
    <property type="evidence" value="ECO:0007669"/>
    <property type="project" value="UniProtKB-KW"/>
</dbReference>
<dbReference type="GO" id="GO:0048018">
    <property type="term" value="F:receptor ligand activity"/>
    <property type="evidence" value="ECO:0000314"/>
    <property type="project" value="AgBase"/>
</dbReference>
<dbReference type="GO" id="GO:0048513">
    <property type="term" value="P:animal organ development"/>
    <property type="evidence" value="ECO:0000318"/>
    <property type="project" value="GO_Central"/>
</dbReference>
<dbReference type="GO" id="GO:0032869">
    <property type="term" value="P:cellular response to insulin stimulus"/>
    <property type="evidence" value="ECO:0007669"/>
    <property type="project" value="Ensembl"/>
</dbReference>
<dbReference type="GO" id="GO:0060396">
    <property type="term" value="P:growth hormone receptor signaling pathway"/>
    <property type="evidence" value="ECO:0000318"/>
    <property type="project" value="GO_Central"/>
</dbReference>
<dbReference type="GO" id="GO:0043066">
    <property type="term" value="P:negative regulation of apoptotic process"/>
    <property type="evidence" value="ECO:0000314"/>
    <property type="project" value="AgBase"/>
</dbReference>
<dbReference type="GO" id="GO:0010629">
    <property type="term" value="P:negative regulation of gene expression"/>
    <property type="evidence" value="ECO:0000314"/>
    <property type="project" value="AgBase"/>
</dbReference>
<dbReference type="GO" id="GO:0035846">
    <property type="term" value="P:oviduct epithelium development"/>
    <property type="evidence" value="ECO:0000314"/>
    <property type="project" value="AgBase"/>
</dbReference>
<dbReference type="GO" id="GO:0010628">
    <property type="term" value="P:positive regulation of gene expression"/>
    <property type="evidence" value="ECO:0000314"/>
    <property type="project" value="AgBase"/>
</dbReference>
<dbReference type="GO" id="GO:0040018">
    <property type="term" value="P:positive regulation of multicellular organism growth"/>
    <property type="evidence" value="ECO:0007669"/>
    <property type="project" value="Ensembl"/>
</dbReference>
<dbReference type="GO" id="GO:0046427">
    <property type="term" value="P:positive regulation of receptor signaling pathway via JAK-STAT"/>
    <property type="evidence" value="ECO:0000318"/>
    <property type="project" value="GO_Central"/>
</dbReference>
<dbReference type="GO" id="GO:0050691">
    <property type="term" value="P:regulation of defense response to virus by host"/>
    <property type="evidence" value="ECO:0000315"/>
    <property type="project" value="AgBase"/>
</dbReference>
<dbReference type="GO" id="GO:0032094">
    <property type="term" value="P:response to food"/>
    <property type="evidence" value="ECO:0007669"/>
    <property type="project" value="Ensembl"/>
</dbReference>
<dbReference type="GO" id="GO:0031667">
    <property type="term" value="P:response to nutrient levels"/>
    <property type="evidence" value="ECO:0000318"/>
    <property type="project" value="GO_Central"/>
</dbReference>
<dbReference type="CDD" id="cd10285">
    <property type="entry name" value="somatotropin_like"/>
    <property type="match status" value="1"/>
</dbReference>
<dbReference type="FunFam" id="1.20.1250.10:FF:000002">
    <property type="entry name" value="Growth hormone"/>
    <property type="match status" value="1"/>
</dbReference>
<dbReference type="Gene3D" id="1.20.1250.10">
    <property type="match status" value="1"/>
</dbReference>
<dbReference type="InterPro" id="IPR009079">
    <property type="entry name" value="4_helix_cytokine-like_core"/>
</dbReference>
<dbReference type="InterPro" id="IPR034975">
    <property type="entry name" value="Somatotropin"/>
</dbReference>
<dbReference type="InterPro" id="IPR001400">
    <property type="entry name" value="Somatotropin/Prolactin"/>
</dbReference>
<dbReference type="InterPro" id="IPR018116">
    <property type="entry name" value="Somatotropin_CS"/>
</dbReference>
<dbReference type="PANTHER" id="PTHR11417:SF2">
    <property type="entry name" value="SOMATOTROPIN"/>
    <property type="match status" value="1"/>
</dbReference>
<dbReference type="PANTHER" id="PTHR11417">
    <property type="entry name" value="SOMATOTROPIN,PROLACTIN"/>
    <property type="match status" value="1"/>
</dbReference>
<dbReference type="Pfam" id="PF00103">
    <property type="entry name" value="Hormone_1"/>
    <property type="match status" value="1"/>
</dbReference>
<dbReference type="PRINTS" id="PR00836">
    <property type="entry name" value="SOMATOTROPIN"/>
</dbReference>
<dbReference type="SUPFAM" id="SSF47266">
    <property type="entry name" value="4-helical cytokines"/>
    <property type="match status" value="1"/>
</dbReference>
<dbReference type="PROSITE" id="PS00266">
    <property type="entry name" value="SOMATOTROPIN_1"/>
    <property type="match status" value="1"/>
</dbReference>
<dbReference type="PROSITE" id="PS00338">
    <property type="entry name" value="SOMATOTROPIN_2"/>
    <property type="match status" value="1"/>
</dbReference>
<keyword id="KW-1015">Disulfide bond</keyword>
<keyword id="KW-0372">Hormone</keyword>
<keyword id="KW-0479">Metal-binding</keyword>
<keyword id="KW-1185">Reference proteome</keyword>
<keyword id="KW-0964">Secreted</keyword>
<keyword id="KW-0732">Signal</keyword>
<keyword id="KW-0862">Zinc</keyword>
<sequence length="216" mass="24713">MAPGSWFSPLLIAVVTLGLPQEAAATFPAMPLSNLFANAVLRAQHLHLLAAETYKEFERTYIPEDQRYTNKNSQAAFCYSETIPAPTGKDDAQQKSDMELLRFSLVLIQSWLTPVQYLSKVFTNNLVFGTSDRVFEKLKDLEEGIQALMRELEDRSPRGPQLLRPTYDKFDIHLRNEDALLKNYGLLSCFKKDLHKVETYLKVMKCRRFGESNCTI</sequence>
<accession>P08998</accession>
<accession>Q53Z10</accession>